<keyword id="KW-0012">Acyltransferase</keyword>
<keyword id="KW-0963">Cytoplasm</keyword>
<keyword id="KW-1185">Reference proteome</keyword>
<keyword id="KW-0808">Transferase</keyword>
<organism>
    <name type="scientific">Shigella boydii serotype 18 (strain CDC 3083-94 / BS512)</name>
    <dbReference type="NCBI Taxonomy" id="344609"/>
    <lineage>
        <taxon>Bacteria</taxon>
        <taxon>Pseudomonadati</taxon>
        <taxon>Pseudomonadota</taxon>
        <taxon>Gammaproteobacteria</taxon>
        <taxon>Enterobacterales</taxon>
        <taxon>Enterobacteriaceae</taxon>
        <taxon>Shigella</taxon>
    </lineage>
</organism>
<protein>
    <recommendedName>
        <fullName evidence="1">Octanoyltransferase</fullName>
        <ecNumber evidence="1">2.3.1.181</ecNumber>
    </recommendedName>
    <alternativeName>
        <fullName evidence="1">Lipoate-protein ligase B</fullName>
    </alternativeName>
    <alternativeName>
        <fullName evidence="1">Lipoyl/octanoyl transferase</fullName>
    </alternativeName>
    <alternativeName>
        <fullName evidence="1">Octanoyl-[acyl-carrier-protein]-protein N-octanoyltransferase</fullName>
    </alternativeName>
</protein>
<comment type="function">
    <text evidence="1">Catalyzes the transfer of endogenously produced octanoic acid from octanoyl-acyl-carrier-protein onto the lipoyl domains of lipoate-dependent enzymes. Lipoyl-ACP can also act as a substrate although octanoyl-ACP is likely to be the physiological substrate.</text>
</comment>
<comment type="catalytic activity">
    <reaction evidence="1">
        <text>octanoyl-[ACP] + L-lysyl-[protein] = N(6)-octanoyl-L-lysyl-[protein] + holo-[ACP] + H(+)</text>
        <dbReference type="Rhea" id="RHEA:17665"/>
        <dbReference type="Rhea" id="RHEA-COMP:9636"/>
        <dbReference type="Rhea" id="RHEA-COMP:9685"/>
        <dbReference type="Rhea" id="RHEA-COMP:9752"/>
        <dbReference type="Rhea" id="RHEA-COMP:9928"/>
        <dbReference type="ChEBI" id="CHEBI:15378"/>
        <dbReference type="ChEBI" id="CHEBI:29969"/>
        <dbReference type="ChEBI" id="CHEBI:64479"/>
        <dbReference type="ChEBI" id="CHEBI:78463"/>
        <dbReference type="ChEBI" id="CHEBI:78809"/>
        <dbReference type="EC" id="2.3.1.181"/>
    </reaction>
</comment>
<comment type="pathway">
    <text evidence="1">Protein modification; protein lipoylation via endogenous pathway; protein N(6)-(lipoyl)lysine from octanoyl-[acyl-carrier-protein]: step 1/2.</text>
</comment>
<comment type="subcellular location">
    <subcellularLocation>
        <location evidence="1">Cytoplasm</location>
    </subcellularLocation>
</comment>
<comment type="miscellaneous">
    <text evidence="1">In the reaction, the free carboxyl group of octanoic acid is attached via an amide linkage to the epsilon-amino group of a specific lysine residue of lipoyl domains of lipoate-dependent enzymes.</text>
</comment>
<comment type="similarity">
    <text evidence="1">Belongs to the LipB family.</text>
</comment>
<evidence type="ECO:0000255" key="1">
    <source>
        <dbReference type="HAMAP-Rule" id="MF_00013"/>
    </source>
</evidence>
<evidence type="ECO:0000255" key="2">
    <source>
        <dbReference type="PROSITE-ProRule" id="PRU01067"/>
    </source>
</evidence>
<dbReference type="EC" id="2.3.1.181" evidence="1"/>
<dbReference type="EMBL" id="CP001063">
    <property type="protein sequence ID" value="ACD10045.1"/>
    <property type="molecule type" value="Genomic_DNA"/>
</dbReference>
<dbReference type="RefSeq" id="WP_000284027.1">
    <property type="nucleotide sequence ID" value="NC_010658.1"/>
</dbReference>
<dbReference type="SMR" id="B2TU88"/>
<dbReference type="STRING" id="344609.SbBS512_E0621"/>
<dbReference type="GeneID" id="93776852"/>
<dbReference type="KEGG" id="sbc:SbBS512_E0621"/>
<dbReference type="HOGENOM" id="CLU_035168_3_1_6"/>
<dbReference type="UniPathway" id="UPA00538">
    <property type="reaction ID" value="UER00592"/>
</dbReference>
<dbReference type="Proteomes" id="UP000001030">
    <property type="component" value="Chromosome"/>
</dbReference>
<dbReference type="GO" id="GO:0005737">
    <property type="term" value="C:cytoplasm"/>
    <property type="evidence" value="ECO:0007669"/>
    <property type="project" value="UniProtKB-SubCell"/>
</dbReference>
<dbReference type="GO" id="GO:0033819">
    <property type="term" value="F:lipoyl(octanoyl) transferase activity"/>
    <property type="evidence" value="ECO:0007669"/>
    <property type="project" value="UniProtKB-EC"/>
</dbReference>
<dbReference type="GO" id="GO:0036211">
    <property type="term" value="P:protein modification process"/>
    <property type="evidence" value="ECO:0007669"/>
    <property type="project" value="InterPro"/>
</dbReference>
<dbReference type="CDD" id="cd16444">
    <property type="entry name" value="LipB"/>
    <property type="match status" value="1"/>
</dbReference>
<dbReference type="FunFam" id="3.30.930.10:FF:000020">
    <property type="entry name" value="Octanoyltransferase"/>
    <property type="match status" value="1"/>
</dbReference>
<dbReference type="Gene3D" id="3.30.930.10">
    <property type="entry name" value="Bira Bifunctional Protein, Domain 2"/>
    <property type="match status" value="1"/>
</dbReference>
<dbReference type="HAMAP" id="MF_00013">
    <property type="entry name" value="LipB"/>
    <property type="match status" value="1"/>
</dbReference>
<dbReference type="InterPro" id="IPR045864">
    <property type="entry name" value="aa-tRNA-synth_II/BPL/LPL"/>
</dbReference>
<dbReference type="InterPro" id="IPR004143">
    <property type="entry name" value="BPL_LPL_catalytic"/>
</dbReference>
<dbReference type="InterPro" id="IPR000544">
    <property type="entry name" value="Octanoyltransferase"/>
</dbReference>
<dbReference type="InterPro" id="IPR020605">
    <property type="entry name" value="Octanoyltransferase_CS"/>
</dbReference>
<dbReference type="NCBIfam" id="TIGR00214">
    <property type="entry name" value="lipB"/>
    <property type="match status" value="1"/>
</dbReference>
<dbReference type="NCBIfam" id="NF010922">
    <property type="entry name" value="PRK14342.1"/>
    <property type="match status" value="1"/>
</dbReference>
<dbReference type="PANTHER" id="PTHR10993:SF7">
    <property type="entry name" value="LIPOYLTRANSFERASE 2, MITOCHONDRIAL-RELATED"/>
    <property type="match status" value="1"/>
</dbReference>
<dbReference type="PANTHER" id="PTHR10993">
    <property type="entry name" value="OCTANOYLTRANSFERASE"/>
    <property type="match status" value="1"/>
</dbReference>
<dbReference type="Pfam" id="PF21948">
    <property type="entry name" value="LplA-B_cat"/>
    <property type="match status" value="1"/>
</dbReference>
<dbReference type="PIRSF" id="PIRSF016262">
    <property type="entry name" value="LPLase"/>
    <property type="match status" value="1"/>
</dbReference>
<dbReference type="SUPFAM" id="SSF55681">
    <property type="entry name" value="Class II aaRS and biotin synthetases"/>
    <property type="match status" value="1"/>
</dbReference>
<dbReference type="PROSITE" id="PS51733">
    <property type="entry name" value="BPL_LPL_CATALYTIC"/>
    <property type="match status" value="1"/>
</dbReference>
<dbReference type="PROSITE" id="PS01313">
    <property type="entry name" value="LIPB"/>
    <property type="match status" value="1"/>
</dbReference>
<accession>B2TU88</accession>
<reference key="1">
    <citation type="submission" date="2008-05" db="EMBL/GenBank/DDBJ databases">
        <title>Complete sequence of Shigella boydii serotype 18 strain BS512.</title>
        <authorList>
            <person name="Rasko D.A."/>
            <person name="Rosovitz M."/>
            <person name="Maurelli A.T."/>
            <person name="Myers G."/>
            <person name="Seshadri R."/>
            <person name="Cer R."/>
            <person name="Jiang L."/>
            <person name="Ravel J."/>
            <person name="Sebastian Y."/>
        </authorList>
    </citation>
    <scope>NUCLEOTIDE SEQUENCE [LARGE SCALE GENOMIC DNA]</scope>
    <source>
        <strain>CDC 3083-94 / BS512</strain>
    </source>
</reference>
<gene>
    <name evidence="1" type="primary">lipB</name>
    <name type="ordered locus">SbBS512_E0621</name>
</gene>
<proteinExistence type="inferred from homology"/>
<name>LIPB_SHIB3</name>
<sequence length="213" mass="23883">MYQDKILVRQLGLQPYEPISQAMHEFTDTRDDSTLDEIWLVEHYPVFTQGQAGKAEHILMPGDIPVIQSDRGGQVTYHGPGQQVMYVLLNLKRRKLGVRELVTLLEQTVVNTLAELGIEAHPRADAPGVYVGEKKICSLGLRIRRGCSFHGLALNVNMDLSPFLRINPCGYAGMEMAKISQWKPEATTNNIAPRLLENILALLNNPDFEYITA</sequence>
<feature type="chain" id="PRO_1000089477" description="Octanoyltransferase">
    <location>
        <begin position="1"/>
        <end position="213"/>
    </location>
</feature>
<feature type="domain" description="BPL/LPL catalytic" evidence="2">
    <location>
        <begin position="32"/>
        <end position="207"/>
    </location>
</feature>
<feature type="active site" description="Acyl-thioester intermediate" evidence="1">
    <location>
        <position position="169"/>
    </location>
</feature>
<feature type="binding site" evidence="1">
    <location>
        <begin position="71"/>
        <end position="78"/>
    </location>
    <ligand>
        <name>substrate</name>
    </ligand>
</feature>
<feature type="binding site" evidence="1">
    <location>
        <begin position="138"/>
        <end position="140"/>
    </location>
    <ligand>
        <name>substrate</name>
    </ligand>
</feature>
<feature type="binding site" evidence="1">
    <location>
        <begin position="151"/>
        <end position="153"/>
    </location>
    <ligand>
        <name>substrate</name>
    </ligand>
</feature>
<feature type="site" description="Lowers pKa of active site Cys" evidence="1">
    <location>
        <position position="135"/>
    </location>
</feature>